<name>GSH1_ARATH</name>
<gene>
    <name type="primary">GSH1</name>
    <name type="synonym">CAD2</name>
    <name type="synonym">GCL</name>
    <name type="synonym">PAD2</name>
    <name type="synonym">RML1</name>
    <name type="ordered locus">At4g23100</name>
    <name type="ORF">F7H19.290</name>
</gene>
<accession>P46309</accession>
<accession>A0FGQ9</accession>
<accession>O82759</accession>
<accession>P92951</accession>
<accession>Q93ZQ6</accession>
<accession>Q944I8</accession>
<evidence type="ECO:0000250" key="1"/>
<evidence type="ECO:0000255" key="2"/>
<evidence type="ECO:0000269" key="3">
    <source>
    </source>
</evidence>
<evidence type="ECO:0000269" key="4">
    <source>
    </source>
</evidence>
<evidence type="ECO:0000269" key="5">
    <source>
    </source>
</evidence>
<evidence type="ECO:0000269" key="6">
    <source>
    </source>
</evidence>
<evidence type="ECO:0000269" key="7">
    <source>
    </source>
</evidence>
<evidence type="ECO:0000269" key="8">
    <source>
    </source>
</evidence>
<evidence type="ECO:0000269" key="9">
    <source>
    </source>
</evidence>
<evidence type="ECO:0000269" key="10">
    <source>
    </source>
</evidence>
<evidence type="ECO:0000269" key="11">
    <source>
    </source>
</evidence>
<evidence type="ECO:0000269" key="12">
    <source>
    </source>
</evidence>
<evidence type="ECO:0000269" key="13">
    <source>
    </source>
</evidence>
<evidence type="ECO:0000269" key="14">
    <source>
    </source>
</evidence>
<evidence type="ECO:0000269" key="15">
    <source>
    </source>
</evidence>
<evidence type="ECO:0000269" key="16">
    <source>
    </source>
</evidence>
<evidence type="ECO:0000269" key="17">
    <source>
    </source>
</evidence>
<evidence type="ECO:0000269" key="18">
    <source>
    </source>
</evidence>
<evidence type="ECO:0000269" key="19">
    <source>
    </source>
</evidence>
<evidence type="ECO:0000269" key="20">
    <source ref="2"/>
</evidence>
<evidence type="ECO:0000269" key="21">
    <source ref="4"/>
</evidence>
<evidence type="ECO:0000303" key="22">
    <source>
    </source>
</evidence>
<evidence type="ECO:0000305" key="23"/>
<sequence length="522" mass="58562">MALLSQAGGSYTVVPSGVCSKAGTKAVVSGGVRNLDVLRMKEAFGSSYSRSLSTKSMLLHSVKRSKRGHQLIVAASPPTEEAVVATEPLTREDLIAYLASGCKTKDKYRIGTEHEKFGFEVNTLRPMKYDQIAELLNGIAERFEWEKVMEGDKIIGLKQGKQSISLEPGGQFELSGAPLETLHQTCAEVNSHLYQVKAVAEEMGIGFLGIGFQPKWRREDIPIMPKGRYDIMRNYMPKVGTLGLDMMLRTCTVQVNLDFSSEADMIRKFRAGLALQPIATALFANSPFTEGKPNGFLSMRSHIWTDTDKDRTGMLPFVFDDSFGFEQYVDYALDVPMYFAYRKNKYIDCTGMTFRQFLAGKLPCLPGELPSYNDWENHLTTIFPEVRLKRYLEMRGADGGPWRRLCALPAFWVGLLYDDDSLQAILDLTADWTPAEREMLRNKVPVTGLKTPFRDGLLKHVAEDVLKLAKDGLERRGYKEAGFLNAVDEVVRTGVTPAEKLLEMYNGEWGQSVDPVFEELLY</sequence>
<keyword id="KW-0025">Alternative splicing</keyword>
<keyword id="KW-0067">ATP-binding</keyword>
<keyword id="KW-0150">Chloroplast</keyword>
<keyword id="KW-1015">Disulfide bond</keyword>
<keyword id="KW-0317">Glutathione biosynthesis</keyword>
<keyword id="KW-0436">Ligase</keyword>
<keyword id="KW-0547">Nucleotide-binding</keyword>
<keyword id="KW-0611">Plant defense</keyword>
<keyword id="KW-0934">Plastid</keyword>
<keyword id="KW-1185">Reference proteome</keyword>
<keyword id="KW-0809">Transit peptide</keyword>
<feature type="transit peptide" description="Chloroplast" evidence="2">
    <location>
        <begin position="1"/>
        <end status="unknown"/>
    </location>
</feature>
<feature type="chain" id="PRO_0000013054" description="Glutamate--cysteine ligase, chloroplastic">
    <location>
        <begin status="unknown"/>
        <end position="522"/>
    </location>
</feature>
<feature type="disulfide bond" evidence="15">
    <location>
        <begin position="186"/>
        <end position="406"/>
    </location>
</feature>
<feature type="disulfide bond" evidence="15">
    <location>
        <begin position="349"/>
        <end position="364"/>
    </location>
</feature>
<feature type="sequence variant" description="In strain: cv. Landsberg erecta and cv. Sha." evidence="20 21">
    <original>A</original>
    <variation>T</variation>
    <location>
        <position position="22"/>
    </location>
</feature>
<feature type="sequence variant" description="In strain: cv. Landsberg erecta." evidence="20">
    <original>Y</original>
    <variation>N</variation>
    <location>
        <position position="48"/>
    </location>
</feature>
<feature type="mutagenesis site" description="20-fold decreased activity. Abrogates the response to changes in redox environment." evidence="15">
    <original>C</original>
    <variation>S</variation>
    <location>
        <position position="186"/>
    </location>
</feature>
<feature type="mutagenesis site" description="In rax1-1; reduced GSH level. Up-regulates APX activity." evidence="10">
    <original>R</original>
    <variation>K</variation>
    <location>
        <position position="228"/>
    </location>
</feature>
<feature type="mutagenesis site" description="In cad2-1; reduced GSH level. Cadmium-sensitive." evidence="17">
    <original>PKV</original>
    <variation>L</variation>
    <location>
        <begin position="237"/>
        <end position="239"/>
    </location>
</feature>
<feature type="mutagenesis site" description="In rml1; GSH defective. Enhanced susceptibility to P.syringae." evidence="3">
    <original>D</original>
    <variation>N</variation>
    <location>
        <position position="258"/>
    </location>
</feature>
<feature type="mutagenesis site" description="In pad2-1; reduced GSH level. Camalexin defective. Enhanced susceptibility to P.porri." evidence="14">
    <original>S</original>
    <variation>N</variation>
    <location>
        <position position="298"/>
    </location>
</feature>
<feature type="mutagenesis site" description="2-fold decreased activity." evidence="15">
    <original>C</original>
    <variation>S</variation>
    <location>
        <position position="349"/>
    </location>
</feature>
<feature type="mutagenesis site" description="2-fold decreased activity." evidence="15">
    <original>C</original>
    <variation>S</variation>
    <location>
        <position position="364"/>
    </location>
</feature>
<feature type="mutagenesis site" description="20-fold decreased activity. Abrogates the response to changes in redox environment." evidence="15">
    <original>C</original>
    <variation>S</variation>
    <location>
        <position position="406"/>
    </location>
</feature>
<feature type="sequence conflict" description="In Ref. 7; AAL16161." evidence="23" ref="7">
    <original>RQ</original>
    <variation>SA</variation>
    <location>
        <begin position="355"/>
        <end position="356"/>
    </location>
</feature>
<feature type="sequence conflict" description="In Ref. 7; AAL08228." evidence="23" ref="7">
    <original>V</original>
    <variation>L</variation>
    <location>
        <position position="413"/>
    </location>
</feature>
<feature type="sequence conflict" description="In Ref. 4; ABJ98542." evidence="23" ref="4">
    <original>T</original>
    <variation>S</variation>
    <location>
        <position position="493"/>
    </location>
</feature>
<organism>
    <name type="scientific">Arabidopsis thaliana</name>
    <name type="common">Mouse-ear cress</name>
    <dbReference type="NCBI Taxonomy" id="3702"/>
    <lineage>
        <taxon>Eukaryota</taxon>
        <taxon>Viridiplantae</taxon>
        <taxon>Streptophyta</taxon>
        <taxon>Embryophyta</taxon>
        <taxon>Tracheophyta</taxon>
        <taxon>Spermatophyta</taxon>
        <taxon>Magnoliopsida</taxon>
        <taxon>eudicotyledons</taxon>
        <taxon>Gunneridae</taxon>
        <taxon>Pentapetalae</taxon>
        <taxon>rosids</taxon>
        <taxon>malvids</taxon>
        <taxon>Brassicales</taxon>
        <taxon>Brassicaceae</taxon>
        <taxon>Camelineae</taxon>
        <taxon>Arabidopsis</taxon>
    </lineage>
</organism>
<comment type="function">
    <text evidence="3 5 6 7 8 10 13 14 16 17 18 19">Seems to play an important role in controlling the expression of resistance responses like the regulation of salicylic acid (SA) and phytoalexin (camalexin) production. Involved in resistance to fungal and bacterial pathogens. Required for the regulation of cell proliferation in root apical meristems through the GSH-dependent developmental pathway. Also participates in the detoxification process, the antioxidant response and is essential for embryo development and proper seed maturation.</text>
</comment>
<comment type="catalytic activity">
    <reaction evidence="9">
        <text>L-cysteine + L-glutamate + ATP = gamma-L-glutamyl-L-cysteine + ADP + phosphate + H(+)</text>
        <dbReference type="Rhea" id="RHEA:13285"/>
        <dbReference type="ChEBI" id="CHEBI:15378"/>
        <dbReference type="ChEBI" id="CHEBI:29985"/>
        <dbReference type="ChEBI" id="CHEBI:30616"/>
        <dbReference type="ChEBI" id="CHEBI:35235"/>
        <dbReference type="ChEBI" id="CHEBI:43474"/>
        <dbReference type="ChEBI" id="CHEBI:58173"/>
        <dbReference type="ChEBI" id="CHEBI:456216"/>
        <dbReference type="EC" id="6.3.2.2"/>
    </reaction>
    <physiologicalReaction direction="left-to-right" evidence="9">
        <dbReference type="Rhea" id="RHEA:13286"/>
    </physiologicalReaction>
</comment>
<comment type="activity regulation">
    <text evidence="9">Feedback inhibition by glutathione. Inhibited by buthionine sulfoximine and cystamine.</text>
</comment>
<comment type="biophysicochemical properties">
    <kinetics>
        <KM evidence="9">9.1 mM for glutamate</KM>
        <KM evidence="9">1.6 mM for cysteine</KM>
        <KM evidence="9">2.7 mM for ATP</KM>
        <Vmax evidence="9">120.0 nmol/min/mg enzyme</Vmax>
    </kinetics>
</comment>
<comment type="pathway">
    <text evidence="9">Sulfur metabolism; glutathione biosynthesis; glutathione from L-cysteine and L-glutamate: step 1/2.</text>
</comment>
<comment type="subunit">
    <text evidence="1">Homodimer or monomer when oxidized or reduced, respectively.</text>
</comment>
<comment type="subcellular location">
    <subcellularLocation>
        <location evidence="11">Plastid</location>
        <location evidence="11">Chloroplast</location>
    </subcellularLocation>
</comment>
<comment type="alternative products">
    <event type="alternative splicing"/>
    <isoform>
        <id>P46309-1</id>
        <name>1</name>
        <sequence type="displayed"/>
    </isoform>
    <text>A number of isoforms are produced. According to EST sequences.</text>
</comment>
<comment type="tissue specificity">
    <text evidence="4">Abundant in leaves and roots. Expressed to a high level in leaf trichomes of mature plant.</text>
</comment>
<comment type="induction">
    <text evidence="4 12 14">Down-regulated in leaf trichomes under salt treatment. Up-regulated by the fungal pathogen Phytophthora porri. Induced by cadmium (PubMed:16502469).</text>
</comment>
<comment type="PTM">
    <text>The Cys-186-Cys-406 disulfide bridge is known to modulate the enzyme activity according to the redox status. The oxidized form constitutes the active enzyme.</text>
</comment>
<comment type="disruption phenotype">
    <text evidence="13">Plants are characterized by a recessive embryo-lethal phenotype.</text>
</comment>
<comment type="similarity">
    <text evidence="23">Belongs to the carboxylate-amine ligase family. Glutamate--cysteine ligase type 2 subfamily.</text>
</comment>
<comment type="sequence caution" evidence="23">
    <conflict type="frameshift">
        <sequence resource="EMBL-CDS" id="CAA82626"/>
    </conflict>
</comment>
<proteinExistence type="evidence at protein level"/>
<protein>
    <recommendedName>
        <fullName evidence="22">Glutamate--cysteine ligase, chloroplastic</fullName>
        <ecNumber evidence="9">6.3.2.2</ecNumber>
    </recommendedName>
    <alternativeName>
        <fullName>Gamma-ECS</fullName>
        <shortName>GCS</shortName>
    </alternativeName>
    <alternativeName>
        <fullName>Gamma-glutamylcysteine synthetase</fullName>
    </alternativeName>
    <alternativeName>
        <fullName>Protein ROOT MERISTEMLESS 1</fullName>
        <shortName>AtGCL</shortName>
    </alternativeName>
    <alternativeName>
        <fullName>Protein cadmium-sensitive 2</fullName>
    </alternativeName>
    <alternativeName>
        <fullName>Protein phytoalexin-deficient 2</fullName>
    </alternativeName>
</protein>
<reference key="1">
    <citation type="journal article" date="1994" name="Proc. Natl. Acad. Sci. U.S.A.">
        <title>Arabidopsis thaliana gamma-glutamylcysteine synthetase is structurally unrelated to mammalian, yeast, and Escherichia coli homologs.</title>
        <authorList>
            <person name="May M.J."/>
            <person name="Leaver C.J."/>
        </authorList>
    </citation>
    <scope>NUCLEOTIDE SEQUENCE [MRNA]</scope>
    <source>
        <strain>cv. Columbia</strain>
        <tissue>Leaf</tissue>
    </source>
</reference>
<reference key="2">
    <citation type="submission" date="1996-12" db="EMBL/GenBank/DDBJ databases">
        <title>Isolation of an Arabidopsis thaliana cDNA encoding a putative gamma-glutamylcysteine synthetase by complementation of a GSHI deficient yeast mutant-glutamylcysteine synthetase.</title>
        <authorList>
            <person name="Ullmann P."/>
            <person name="Gondet L."/>
            <person name="Bach T.J."/>
        </authorList>
    </citation>
    <scope>NUCLEOTIDE SEQUENCE [MRNA]</scope>
    <scope>VARIANT THR-22</scope>
    <scope>VARIANT ASN-48</scope>
    <source>
        <strain>cv. Landsberg erecta</strain>
    </source>
</reference>
<reference key="3">
    <citation type="journal article" date="1998" name="Plant J.">
        <title>The glutathione-deficient, cadmium-sensitive mutant, cad2-1, of Arabidopsis thaliana is deficient in gamma-glutamylcysteine synthetase.</title>
        <authorList>
            <person name="Cobbett C.S."/>
            <person name="May M.J."/>
            <person name="Howden R."/>
            <person name="Rolls B."/>
        </authorList>
    </citation>
    <scope>NUCLEOTIDE SEQUENCE [GENOMIC DNA]</scope>
    <source>
        <strain>cv. Columbia</strain>
    </source>
</reference>
<reference key="4">
    <citation type="submission" date="2006-09" db="EMBL/GenBank/DDBJ databases">
        <title>Glutathione synthesis in Arabidopsis ecotypes.</title>
        <authorList>
            <person name="Kopriva S."/>
            <person name="Mullineaux P.M."/>
        </authorList>
    </citation>
    <scope>NUCLEOTIDE SEQUENCE [MRNA]</scope>
    <scope>VARIANT THR-22</scope>
    <source>
        <strain>cv. Sha</strain>
    </source>
</reference>
<reference key="5">
    <citation type="journal article" date="1999" name="Nature">
        <title>Sequence and analysis of chromosome 4 of the plant Arabidopsis thaliana.</title>
        <authorList>
            <person name="Mayer K.F.X."/>
            <person name="Schueller C."/>
            <person name="Wambutt R."/>
            <person name="Murphy G."/>
            <person name="Volckaert G."/>
            <person name="Pohl T."/>
            <person name="Duesterhoeft A."/>
            <person name="Stiekema W."/>
            <person name="Entian K.-D."/>
            <person name="Terryn N."/>
            <person name="Harris B."/>
            <person name="Ansorge W."/>
            <person name="Brandt P."/>
            <person name="Grivell L.A."/>
            <person name="Rieger M."/>
            <person name="Weichselgartner M."/>
            <person name="de Simone V."/>
            <person name="Obermaier B."/>
            <person name="Mache R."/>
            <person name="Mueller M."/>
            <person name="Kreis M."/>
            <person name="Delseny M."/>
            <person name="Puigdomenech P."/>
            <person name="Watson M."/>
            <person name="Schmidtheini T."/>
            <person name="Reichert B."/>
            <person name="Portetelle D."/>
            <person name="Perez-Alonso M."/>
            <person name="Boutry M."/>
            <person name="Bancroft I."/>
            <person name="Vos P."/>
            <person name="Hoheisel J."/>
            <person name="Zimmermann W."/>
            <person name="Wedler H."/>
            <person name="Ridley P."/>
            <person name="Langham S.-A."/>
            <person name="McCullagh B."/>
            <person name="Bilham L."/>
            <person name="Robben J."/>
            <person name="van der Schueren J."/>
            <person name="Grymonprez B."/>
            <person name="Chuang Y.-J."/>
            <person name="Vandenbussche F."/>
            <person name="Braeken M."/>
            <person name="Weltjens I."/>
            <person name="Voet M."/>
            <person name="Bastiaens I."/>
            <person name="Aert R."/>
            <person name="Defoor E."/>
            <person name="Weitzenegger T."/>
            <person name="Bothe G."/>
            <person name="Ramsperger U."/>
            <person name="Hilbert H."/>
            <person name="Braun M."/>
            <person name="Holzer E."/>
            <person name="Brandt A."/>
            <person name="Peters S."/>
            <person name="van Staveren M."/>
            <person name="Dirkse W."/>
            <person name="Mooijman P."/>
            <person name="Klein Lankhorst R."/>
            <person name="Rose M."/>
            <person name="Hauf J."/>
            <person name="Koetter P."/>
            <person name="Berneiser S."/>
            <person name="Hempel S."/>
            <person name="Feldpausch M."/>
            <person name="Lamberth S."/>
            <person name="Van den Daele H."/>
            <person name="De Keyser A."/>
            <person name="Buysshaert C."/>
            <person name="Gielen J."/>
            <person name="Villarroel R."/>
            <person name="De Clercq R."/>
            <person name="van Montagu M."/>
            <person name="Rogers J."/>
            <person name="Cronin A."/>
            <person name="Quail M.A."/>
            <person name="Bray-Allen S."/>
            <person name="Clark L."/>
            <person name="Doggett J."/>
            <person name="Hall S."/>
            <person name="Kay M."/>
            <person name="Lennard N."/>
            <person name="McLay K."/>
            <person name="Mayes R."/>
            <person name="Pettett A."/>
            <person name="Rajandream M.A."/>
            <person name="Lyne M."/>
            <person name="Benes V."/>
            <person name="Rechmann S."/>
            <person name="Borkova D."/>
            <person name="Bloecker H."/>
            <person name="Scharfe M."/>
            <person name="Grimm M."/>
            <person name="Loehnert T.-H."/>
            <person name="Dose S."/>
            <person name="de Haan M."/>
            <person name="Maarse A.C."/>
            <person name="Schaefer M."/>
            <person name="Mueller-Auer S."/>
            <person name="Gabel C."/>
            <person name="Fuchs M."/>
            <person name="Fartmann B."/>
            <person name="Granderath K."/>
            <person name="Dauner D."/>
            <person name="Herzl A."/>
            <person name="Neumann S."/>
            <person name="Argiriou A."/>
            <person name="Vitale D."/>
            <person name="Liguori R."/>
            <person name="Piravandi E."/>
            <person name="Massenet O."/>
            <person name="Quigley F."/>
            <person name="Clabauld G."/>
            <person name="Muendlein A."/>
            <person name="Felber R."/>
            <person name="Schnabl S."/>
            <person name="Hiller R."/>
            <person name="Schmidt W."/>
            <person name="Lecharny A."/>
            <person name="Aubourg S."/>
            <person name="Chefdor F."/>
            <person name="Cooke R."/>
            <person name="Berger C."/>
            <person name="Monfort A."/>
            <person name="Casacuberta E."/>
            <person name="Gibbons T."/>
            <person name="Weber N."/>
            <person name="Vandenbol M."/>
            <person name="Bargues M."/>
            <person name="Terol J."/>
            <person name="Torres A."/>
            <person name="Perez-Perez A."/>
            <person name="Purnelle B."/>
            <person name="Bent E."/>
            <person name="Johnson S."/>
            <person name="Tacon D."/>
            <person name="Jesse T."/>
            <person name="Heijnen L."/>
            <person name="Schwarz S."/>
            <person name="Scholler P."/>
            <person name="Heber S."/>
            <person name="Francs P."/>
            <person name="Bielke C."/>
            <person name="Frishman D."/>
            <person name="Haase D."/>
            <person name="Lemcke K."/>
            <person name="Mewes H.-W."/>
            <person name="Stocker S."/>
            <person name="Zaccaria P."/>
            <person name="Bevan M."/>
            <person name="Wilson R.K."/>
            <person name="de la Bastide M."/>
            <person name="Habermann K."/>
            <person name="Parnell L."/>
            <person name="Dedhia N."/>
            <person name="Gnoj L."/>
            <person name="Schutz K."/>
            <person name="Huang E."/>
            <person name="Spiegel L."/>
            <person name="Sekhon M."/>
            <person name="Murray J."/>
            <person name="Sheet P."/>
            <person name="Cordes M."/>
            <person name="Abu-Threideh J."/>
            <person name="Stoneking T."/>
            <person name="Kalicki J."/>
            <person name="Graves T."/>
            <person name="Harmon G."/>
            <person name="Edwards J."/>
            <person name="Latreille P."/>
            <person name="Courtney L."/>
            <person name="Cloud J."/>
            <person name="Abbott A."/>
            <person name="Scott K."/>
            <person name="Johnson D."/>
            <person name="Minx P."/>
            <person name="Bentley D."/>
            <person name="Fulton B."/>
            <person name="Miller N."/>
            <person name="Greco T."/>
            <person name="Kemp K."/>
            <person name="Kramer J."/>
            <person name="Fulton L."/>
            <person name="Mardis E."/>
            <person name="Dante M."/>
            <person name="Pepin K."/>
            <person name="Hillier L.W."/>
            <person name="Nelson J."/>
            <person name="Spieth J."/>
            <person name="Ryan E."/>
            <person name="Andrews S."/>
            <person name="Geisel C."/>
            <person name="Layman D."/>
            <person name="Du H."/>
            <person name="Ali J."/>
            <person name="Berghoff A."/>
            <person name="Jones K."/>
            <person name="Drone K."/>
            <person name="Cotton M."/>
            <person name="Joshu C."/>
            <person name="Antonoiu B."/>
            <person name="Zidanic M."/>
            <person name="Strong C."/>
            <person name="Sun H."/>
            <person name="Lamar B."/>
            <person name="Yordan C."/>
            <person name="Ma P."/>
            <person name="Zhong J."/>
            <person name="Preston R."/>
            <person name="Vil D."/>
            <person name="Shekher M."/>
            <person name="Matero A."/>
            <person name="Shah R."/>
            <person name="Swaby I.K."/>
            <person name="O'Shaughnessy A."/>
            <person name="Rodriguez M."/>
            <person name="Hoffman J."/>
            <person name="Till S."/>
            <person name="Granat S."/>
            <person name="Shohdy N."/>
            <person name="Hasegawa A."/>
            <person name="Hameed A."/>
            <person name="Lodhi M."/>
            <person name="Johnson A."/>
            <person name="Chen E."/>
            <person name="Marra M.A."/>
            <person name="Martienssen R."/>
            <person name="McCombie W.R."/>
        </authorList>
    </citation>
    <scope>NUCLEOTIDE SEQUENCE [LARGE SCALE GENOMIC DNA]</scope>
    <source>
        <strain>cv. Columbia</strain>
    </source>
</reference>
<reference key="6">
    <citation type="journal article" date="2017" name="Plant J.">
        <title>Araport11: a complete reannotation of the Arabidopsis thaliana reference genome.</title>
        <authorList>
            <person name="Cheng C.Y."/>
            <person name="Krishnakumar V."/>
            <person name="Chan A.P."/>
            <person name="Thibaud-Nissen F."/>
            <person name="Schobel S."/>
            <person name="Town C.D."/>
        </authorList>
    </citation>
    <scope>GENOME REANNOTATION</scope>
    <source>
        <strain>cv. Columbia</strain>
    </source>
</reference>
<reference key="7">
    <citation type="journal article" date="2003" name="Science">
        <title>Empirical analysis of transcriptional activity in the Arabidopsis genome.</title>
        <authorList>
            <person name="Yamada K."/>
            <person name="Lim J."/>
            <person name="Dale J.M."/>
            <person name="Chen H."/>
            <person name="Shinn P."/>
            <person name="Palm C.J."/>
            <person name="Southwick A.M."/>
            <person name="Wu H.C."/>
            <person name="Kim C.J."/>
            <person name="Nguyen M."/>
            <person name="Pham P.K."/>
            <person name="Cheuk R.F."/>
            <person name="Karlin-Newmann G."/>
            <person name="Liu S.X."/>
            <person name="Lam B."/>
            <person name="Sakano H."/>
            <person name="Wu T."/>
            <person name="Yu G."/>
            <person name="Miranda M."/>
            <person name="Quach H.L."/>
            <person name="Tripp M."/>
            <person name="Chang C.H."/>
            <person name="Lee J.M."/>
            <person name="Toriumi M.J."/>
            <person name="Chan M.M."/>
            <person name="Tang C.C."/>
            <person name="Onodera C.S."/>
            <person name="Deng J.M."/>
            <person name="Akiyama K."/>
            <person name="Ansari Y."/>
            <person name="Arakawa T."/>
            <person name="Banh J."/>
            <person name="Banno F."/>
            <person name="Bowser L."/>
            <person name="Brooks S.Y."/>
            <person name="Carninci P."/>
            <person name="Chao Q."/>
            <person name="Choy N."/>
            <person name="Enju A."/>
            <person name="Goldsmith A.D."/>
            <person name="Gurjal M."/>
            <person name="Hansen N.F."/>
            <person name="Hayashizaki Y."/>
            <person name="Johnson-Hopson C."/>
            <person name="Hsuan V.W."/>
            <person name="Iida K."/>
            <person name="Karnes M."/>
            <person name="Khan S."/>
            <person name="Koesema E."/>
            <person name="Ishida J."/>
            <person name="Jiang P.X."/>
            <person name="Jones T."/>
            <person name="Kawai J."/>
            <person name="Kamiya A."/>
            <person name="Meyers C."/>
            <person name="Nakajima M."/>
            <person name="Narusaka M."/>
            <person name="Seki M."/>
            <person name="Sakurai T."/>
            <person name="Satou M."/>
            <person name="Tamse R."/>
            <person name="Vaysberg M."/>
            <person name="Wallender E.K."/>
            <person name="Wong C."/>
            <person name="Yamamura Y."/>
            <person name="Yuan S."/>
            <person name="Shinozaki K."/>
            <person name="Davis R.W."/>
            <person name="Theologis A."/>
            <person name="Ecker J.R."/>
        </authorList>
    </citation>
    <scope>NUCLEOTIDE SEQUENCE [LARGE SCALE MRNA]</scope>
    <source>
        <strain>cv. Columbia</strain>
    </source>
</reference>
<reference key="8">
    <citation type="journal article" date="1994" name="Proc. Natl. Acad. Sci. U.S.A.">
        <title>Isolation of phytoalexin-deficient mutants of Arabidopsis thaliana and characterization of their interactions with bacterial pathogens.</title>
        <authorList>
            <person name="Glazebrook J."/>
            <person name="Ausubel F.M."/>
        </authorList>
    </citation>
    <scope>FUNCTION</scope>
</reference>
<reference key="9">
    <citation type="journal article" date="1995" name="Plant Physiol.">
        <title>RML1 and RML2, Arabidopsis genes required for cell proliferation at the root tip.</title>
        <authorList>
            <person name="Cheng J.-C."/>
            <person name="Seeley K.A."/>
            <person name="Sung Z.R."/>
        </authorList>
    </citation>
    <scope>FUNCTION</scope>
</reference>
<reference key="10">
    <citation type="journal article" date="1995" name="Plant Physiol.">
        <title>A cadmium-sensitive, glutathione-deficient mutant of Arabidopsis thaliana.</title>
        <authorList>
            <person name="Howden R."/>
            <person name="Andersen C.R."/>
            <person name="Goldsbrough P.B."/>
            <person name="Cobbett C.S."/>
        </authorList>
    </citation>
    <scope>FUNCTION</scope>
    <scope>MUTAGENESIS OF 237-PRO--VAL-239</scope>
</reference>
<reference key="11">
    <citation type="journal article" date="1996" name="Genetics">
        <title>Isolation of Arabidopsis mutants with enhanced disease susceptibility by direct screening.</title>
        <authorList>
            <person name="Glazebrook J."/>
            <person name="Rogers E.E."/>
            <person name="Ausubel F.M."/>
        </authorList>
    </citation>
    <scope>FUNCTION</scope>
</reference>
<reference key="12">
    <citation type="journal article" date="2000" name="Plant Cell">
        <title>The ROOT MERISTEMLESS1/CADMIUM SENSITIVE2 gene defines a glutathione-dependent pathway involved in initiation and maintenance of cell division during postembryonic root development.</title>
        <authorList>
            <person name="Vernoux T."/>
            <person name="Wilson R.C."/>
            <person name="Seeley K.A."/>
            <person name="Reichheld J.-P."/>
            <person name="Muroy S."/>
            <person name="Brown S."/>
            <person name="Maughan S.C."/>
            <person name="Cobbett C.S."/>
            <person name="Van Montagu M."/>
            <person name="Inze D."/>
            <person name="May M.J."/>
            <person name="Sung Z.R."/>
        </authorList>
    </citation>
    <scope>FUNCTION</scope>
    <scope>MUTAGENESIS OF ASP-258</scope>
</reference>
<reference key="13">
    <citation type="journal article" date="2000" name="Proc. Natl. Acad. Sci. U.S.A.">
        <title>Glutathione biosynthesis in Arabidopsis trichome cells.</title>
        <authorList>
            <person name="Gutierrez-Alcala G."/>
            <person name="Gotor C."/>
            <person name="Meyer A.J."/>
            <person name="Fricker M."/>
            <person name="Vega J.M."/>
            <person name="Romero L.C."/>
        </authorList>
    </citation>
    <scope>TISSUE SPECIFICITY</scope>
    <scope>INDUCTION</scope>
</reference>
<reference key="14">
    <citation type="journal article" date="2001" name="Plant J.">
        <title>Characterization of an Arabidopsis-Phytophthora pathosystem: resistance requires a functional PAD2 gene and is independent of salicylic acid, ethylene and jasmonic acid signalling.</title>
        <authorList>
            <person name="Roetschi A."/>
            <person name="Si-Ammour A."/>
            <person name="Belbahri L."/>
            <person name="Mauch F."/>
            <person name="Mauch-Mani B."/>
        </authorList>
    </citation>
    <scope>FUNCTION</scope>
</reference>
<reference key="15">
    <citation type="journal article" date="2001" name="Plant Physiol.">
        <title>The biological functions of glutathione revisited in arabidopsis transgenic plants with altered glutathione levels.</title>
        <authorList>
            <person name="Xiang C."/>
            <person name="Werner B.L."/>
            <person name="Christensen E.M."/>
            <person name="Oliver D.J."/>
        </authorList>
    </citation>
    <scope>FUNCTION</scope>
</reference>
<reference key="16">
    <citation type="journal article" date="2003" name="Plant J.">
        <title>Arabidopsis local resistance to Botrytis cinerea involves salicylic acid and camalexin and requires EDS4 and PAD2, but not SID2, EDS5 or PAD4.</title>
        <authorList>
            <person name="Ferrari S."/>
            <person name="Plotnikova J.M."/>
            <person name="De Lorenzo G."/>
            <person name="Ausubel F.M."/>
        </authorList>
    </citation>
    <scope>FUNCTION</scope>
</reference>
<reference key="17">
    <citation type="journal article" date="2004" name="J. Biol. Chem.">
        <title>Arabidopsis thaliana glutamate-cysteine ligase: functional properties, kinetic mechanism, and regulation of activity.</title>
        <authorList>
            <person name="Jez J.M."/>
            <person name="Cahoon R.E."/>
            <person name="Chen S."/>
        </authorList>
    </citation>
    <scope>CATALYTIC ACTIVITY</scope>
    <scope>BIOPHYSICOCHEMICAL PROPERTIES</scope>
    <scope>ACTIVITY REGULATION</scope>
    <scope>PATHWAY</scope>
    <scope>SUBUNIT</scope>
</reference>
<reference key="18">
    <citation type="journal article" date="2004" name="Plant Cell">
        <title>Evidence for a direct link between glutathione biosynthesis and stress defense gene expression in Arabidopsis.</title>
        <authorList>
            <person name="Ball L."/>
            <person name="Accotto G.-P."/>
            <person name="Bechtold U."/>
            <person name="Creissen G."/>
            <person name="Funck D."/>
            <person name="Jimenez A."/>
            <person name="Kular B."/>
            <person name="Leyland N."/>
            <person name="Mejia-Carranza J."/>
            <person name="Reynolds H."/>
            <person name="Karpinski S."/>
            <person name="Mullineaux P.M."/>
        </authorList>
    </citation>
    <scope>FUNCTION</scope>
    <scope>MUTAGENESIS OF ARG-228</scope>
</reference>
<reference key="19">
    <citation type="journal article" date="2004" name="Plant Cell Physiol.">
        <title>Level of glutathione is regulated by ATP-dependent ligation of glutamate and cysteine through photosynthesis in Arabidopsis thaliana: mechanism of strong interaction of light intensity with flowering.</title>
        <authorList>
            <person name="Ogawa K."/>
            <person name="Hatano-Iwasaki A."/>
            <person name="Yanagida M."/>
            <person name="Iwabuchi M."/>
        </authorList>
    </citation>
    <scope>FUNCTION</scope>
</reference>
<reference key="20">
    <citation type="journal article" date="2005" name="Plant J.">
        <title>Differential targeting of GSH1 and GSH2 is achieved by multiple transcription initiation: implications for the compartmentation of glutathione biosynthesis in the Brassicaceae.</title>
        <authorList>
            <person name="Wachter A."/>
            <person name="Wolf S."/>
            <person name="Steininger H."/>
            <person name="Bogs J."/>
            <person name="Rausch T."/>
        </authorList>
    </citation>
    <scope>SUBCELLULAR LOCATION</scope>
</reference>
<reference key="21">
    <citation type="journal article" date="2006" name="Plant Physiol.">
        <title>Maturation of Arabidopsis seeds is dependent on glutathione biosynthesis within the embryo.</title>
        <authorList>
            <person name="Cairns N.G."/>
            <person name="Pasternak M."/>
            <person name="Wachter A."/>
            <person name="Cobbett C.S."/>
            <person name="Meyer A.J."/>
        </authorList>
    </citation>
    <scope>FUNCTION</scope>
    <scope>DISRUPTION PHENOTYPE</scope>
</reference>
<reference key="22">
    <citation type="journal article" date="2006" name="Proteomics">
        <title>The early responses of Arabidopsis thaliana cells to cadmium exposure explored by protein and metabolite profiling analyses.</title>
        <authorList>
            <person name="Sarry J.-E."/>
            <person name="Kuhn L."/>
            <person name="Ducruix C."/>
            <person name="Lafaye A."/>
            <person name="Junot C."/>
            <person name="Hugouvieux V."/>
            <person name="Jourdain A."/>
            <person name="Bastien O."/>
            <person name="Fievet J.B."/>
            <person name="Vailhen D."/>
            <person name="Amekraz B."/>
            <person name="Moulin C."/>
            <person name="Ezan E."/>
            <person name="Garin J."/>
            <person name="Bourguignon J."/>
        </authorList>
    </citation>
    <scope>INDUCTION BY CADMIUM</scope>
    <source>
        <strain>cv. Columbia</strain>
    </source>
</reference>
<reference key="23">
    <citation type="journal article" date="2007" name="Plant Cell">
        <title>Thiol-based regulation of redox-active glutamate-cysteine ligase from Arabidopsis thaliana.</title>
        <authorList>
            <person name="Hicks L.M."/>
            <person name="Cahoon R.E."/>
            <person name="Bonner E.R."/>
            <person name="Rivard R.S."/>
            <person name="Sheffield J."/>
            <person name="Jez J.M."/>
        </authorList>
    </citation>
    <scope>DISULFIDE BONDS</scope>
    <scope>MUTAGENESIS OF CYS-186; CYS-349; CYS-364 AND CYS-406</scope>
</reference>
<reference key="24">
    <citation type="journal article" date="2007" name="Plant J.">
        <title>Identification of PAD2 as a gamma-glutamylcysteine synthetase highlights the importance of glutathione in disease resistance of Arabidopsis.</title>
        <authorList>
            <person name="Parisy V."/>
            <person name="Poinssot B."/>
            <person name="Owsianowski L."/>
            <person name="Buchala A."/>
            <person name="Glazebrook J."/>
            <person name="Mauch F."/>
        </authorList>
    </citation>
    <scope>FUNCTION</scope>
    <scope>INDUCTION</scope>
    <scope>MUTAGENESIS OF SER-298</scope>
</reference>
<dbReference type="EC" id="6.3.2.2" evidence="9"/>
<dbReference type="EMBL" id="Z29490">
    <property type="protein sequence ID" value="CAA82626.1"/>
    <property type="status" value="ALT_FRAME"/>
    <property type="molecule type" value="mRNA"/>
</dbReference>
<dbReference type="EMBL" id="Y09944">
    <property type="protein sequence ID" value="CAA71075.1"/>
    <property type="molecule type" value="mRNA"/>
</dbReference>
<dbReference type="EMBL" id="AF068299">
    <property type="protein sequence ID" value="AAD14544.1"/>
    <property type="molecule type" value="Genomic_DNA"/>
</dbReference>
<dbReference type="EMBL" id="DQ993178">
    <property type="protein sequence ID" value="ABJ98542.1"/>
    <property type="molecule type" value="mRNA"/>
</dbReference>
<dbReference type="EMBL" id="AL031018">
    <property type="protein sequence ID" value="CAA19826.1"/>
    <property type="molecule type" value="Genomic_DNA"/>
</dbReference>
<dbReference type="EMBL" id="AL161558">
    <property type="protein sequence ID" value="CAB79265.1"/>
    <property type="molecule type" value="Genomic_DNA"/>
</dbReference>
<dbReference type="EMBL" id="CP002687">
    <property type="protein sequence ID" value="AEE84706.1"/>
    <property type="molecule type" value="Genomic_DNA"/>
</dbReference>
<dbReference type="EMBL" id="CP002687">
    <property type="protein sequence ID" value="AEE84708.1"/>
    <property type="molecule type" value="Genomic_DNA"/>
</dbReference>
<dbReference type="EMBL" id="AF419576">
    <property type="protein sequence ID" value="AAL31908.1"/>
    <property type="molecule type" value="mRNA"/>
</dbReference>
<dbReference type="EMBL" id="AF428393">
    <property type="protein sequence ID" value="AAL16161.1"/>
    <property type="molecule type" value="mRNA"/>
</dbReference>
<dbReference type="EMBL" id="AY056372">
    <property type="protein sequence ID" value="AAL08228.1"/>
    <property type="molecule type" value="mRNA"/>
</dbReference>
<dbReference type="EMBL" id="AY143970">
    <property type="protein sequence ID" value="AAN28909.1"/>
    <property type="molecule type" value="mRNA"/>
</dbReference>
<dbReference type="PIR" id="T05142">
    <property type="entry name" value="T05142"/>
</dbReference>
<dbReference type="RefSeq" id="NP_001190808.1">
    <molecule id="P46309-1"/>
    <property type="nucleotide sequence ID" value="NM_001203879.2"/>
</dbReference>
<dbReference type="RefSeq" id="NP_194041.1">
    <molecule id="P46309-1"/>
    <property type="nucleotide sequence ID" value="NM_118439.4"/>
</dbReference>
<dbReference type="SMR" id="P46309"/>
<dbReference type="BioGRID" id="13698">
    <property type="interactions" value="11"/>
</dbReference>
<dbReference type="FunCoup" id="P46309">
    <property type="interactions" value="1460"/>
</dbReference>
<dbReference type="STRING" id="3702.P46309"/>
<dbReference type="GlyGen" id="P46309">
    <property type="glycosylation" value="1 site"/>
</dbReference>
<dbReference type="MetOSite" id="P46309"/>
<dbReference type="PaxDb" id="3702-AT4G23100.3"/>
<dbReference type="ProteomicsDB" id="248493">
    <molecule id="P46309-1"/>
</dbReference>
<dbReference type="EnsemblPlants" id="AT4G23100.1">
    <molecule id="P46309-1"/>
    <property type="protein sequence ID" value="AT4G23100.1"/>
    <property type="gene ID" value="AT4G23100"/>
</dbReference>
<dbReference type="EnsemblPlants" id="AT4G23100.3">
    <molecule id="P46309-1"/>
    <property type="protein sequence ID" value="AT4G23100.3"/>
    <property type="gene ID" value="AT4G23100"/>
</dbReference>
<dbReference type="GeneID" id="828409"/>
<dbReference type="Gramene" id="AT4G23100.1">
    <molecule id="P46309-1"/>
    <property type="protein sequence ID" value="AT4G23100.1"/>
    <property type="gene ID" value="AT4G23100"/>
</dbReference>
<dbReference type="Gramene" id="AT4G23100.3">
    <molecule id="P46309-1"/>
    <property type="protein sequence ID" value="AT4G23100.3"/>
    <property type="gene ID" value="AT4G23100"/>
</dbReference>
<dbReference type="KEGG" id="ath:AT4G23100"/>
<dbReference type="Araport" id="AT4G23100"/>
<dbReference type="TAIR" id="AT4G23100">
    <property type="gene designation" value="GSH1"/>
</dbReference>
<dbReference type="eggNOG" id="ENOG502QVEN">
    <property type="taxonomic scope" value="Eukaryota"/>
</dbReference>
<dbReference type="HOGENOM" id="CLU_026610_0_0_1"/>
<dbReference type="InParanoid" id="P46309"/>
<dbReference type="OMA" id="WADHLTT"/>
<dbReference type="PhylomeDB" id="P46309"/>
<dbReference type="BioCyc" id="ARA:AT4G23100-MONOMER"/>
<dbReference type="BioCyc" id="MetaCyc:AT4G23100-MONOMER"/>
<dbReference type="BRENDA" id="6.3.2.2">
    <property type="organism ID" value="399"/>
</dbReference>
<dbReference type="SABIO-RK" id="P46309"/>
<dbReference type="UniPathway" id="UPA00142">
    <property type="reaction ID" value="UER00209"/>
</dbReference>
<dbReference type="CD-CODE" id="4299E36E">
    <property type="entry name" value="Nucleolus"/>
</dbReference>
<dbReference type="PRO" id="PR:P46309"/>
<dbReference type="Proteomes" id="UP000006548">
    <property type="component" value="Chromosome 4"/>
</dbReference>
<dbReference type="ExpressionAtlas" id="P46309">
    <property type="expression patterns" value="baseline and differential"/>
</dbReference>
<dbReference type="GO" id="GO:0009507">
    <property type="term" value="C:chloroplast"/>
    <property type="evidence" value="ECO:0000314"/>
    <property type="project" value="TAIR"/>
</dbReference>
<dbReference type="GO" id="GO:0009570">
    <property type="term" value="C:chloroplast stroma"/>
    <property type="evidence" value="ECO:0007005"/>
    <property type="project" value="TAIR"/>
</dbReference>
<dbReference type="GO" id="GO:0005829">
    <property type="term" value="C:cytosol"/>
    <property type="evidence" value="ECO:0007005"/>
    <property type="project" value="TAIR"/>
</dbReference>
<dbReference type="GO" id="GO:0009536">
    <property type="term" value="C:plastid"/>
    <property type="evidence" value="ECO:0007005"/>
    <property type="project" value="TAIR"/>
</dbReference>
<dbReference type="GO" id="GO:0005524">
    <property type="term" value="F:ATP binding"/>
    <property type="evidence" value="ECO:0007669"/>
    <property type="project" value="UniProtKB-KW"/>
</dbReference>
<dbReference type="GO" id="GO:0004357">
    <property type="term" value="F:glutamate-cysteine ligase activity"/>
    <property type="evidence" value="ECO:0000314"/>
    <property type="project" value="TAIR"/>
</dbReference>
<dbReference type="GO" id="GO:0052544">
    <property type="term" value="P:defense response by callose deposition in cell wall"/>
    <property type="evidence" value="ECO:0000315"/>
    <property type="project" value="TAIR"/>
</dbReference>
<dbReference type="GO" id="GO:0042742">
    <property type="term" value="P:defense response to bacterium"/>
    <property type="evidence" value="ECO:0000315"/>
    <property type="project" value="TAIR"/>
</dbReference>
<dbReference type="GO" id="GO:0050832">
    <property type="term" value="P:defense response to fungus"/>
    <property type="evidence" value="ECO:0000315"/>
    <property type="project" value="TAIR"/>
</dbReference>
<dbReference type="GO" id="GO:0002213">
    <property type="term" value="P:defense response to insect"/>
    <property type="evidence" value="ECO:0000315"/>
    <property type="project" value="TAIR"/>
</dbReference>
<dbReference type="GO" id="GO:0009908">
    <property type="term" value="P:flower development"/>
    <property type="evidence" value="ECO:0000315"/>
    <property type="project" value="TAIR"/>
</dbReference>
<dbReference type="GO" id="GO:0019761">
    <property type="term" value="P:glucosinolate biosynthetic process"/>
    <property type="evidence" value="ECO:0000315"/>
    <property type="project" value="TAIR"/>
</dbReference>
<dbReference type="GO" id="GO:0006750">
    <property type="term" value="P:glutathione biosynthetic process"/>
    <property type="evidence" value="ECO:0000314"/>
    <property type="project" value="TAIR"/>
</dbReference>
<dbReference type="GO" id="GO:0009700">
    <property type="term" value="P:indole phytoalexin biosynthetic process"/>
    <property type="evidence" value="ECO:0000315"/>
    <property type="project" value="TAIR"/>
</dbReference>
<dbReference type="GO" id="GO:0046686">
    <property type="term" value="P:response to cadmium ion"/>
    <property type="evidence" value="ECO:0000315"/>
    <property type="project" value="TAIR"/>
</dbReference>
<dbReference type="GO" id="GO:0009408">
    <property type="term" value="P:response to heat"/>
    <property type="evidence" value="ECO:0000315"/>
    <property type="project" value="TAIR"/>
</dbReference>
<dbReference type="GO" id="GO:0009753">
    <property type="term" value="P:response to jasmonic acid"/>
    <property type="evidence" value="ECO:0000270"/>
    <property type="project" value="TAIR"/>
</dbReference>
<dbReference type="GO" id="GO:0010193">
    <property type="term" value="P:response to ozone"/>
    <property type="evidence" value="ECO:0000270"/>
    <property type="project" value="TAIR"/>
</dbReference>
<dbReference type="FunFam" id="3.30.590.20:FF:000003">
    <property type="entry name" value="Glutamate--cysteine ligase"/>
    <property type="match status" value="1"/>
</dbReference>
<dbReference type="Gene3D" id="3.30.590.20">
    <property type="match status" value="1"/>
</dbReference>
<dbReference type="InterPro" id="IPR035434">
    <property type="entry name" value="GCL_bact_plant"/>
</dbReference>
<dbReference type="InterPro" id="IPR006336">
    <property type="entry name" value="GCS2"/>
</dbReference>
<dbReference type="InterPro" id="IPR014746">
    <property type="entry name" value="Gln_synth/guanido_kin_cat_dom"/>
</dbReference>
<dbReference type="InterPro" id="IPR011556">
    <property type="entry name" value="Glut_cys_lig_pln_type"/>
</dbReference>
<dbReference type="NCBIfam" id="TIGR01436">
    <property type="entry name" value="glu_cys_lig_pln"/>
    <property type="match status" value="1"/>
</dbReference>
<dbReference type="PANTHER" id="PTHR34378">
    <property type="entry name" value="GLUTAMATE--CYSTEINE LIGASE, CHLOROPLASTIC"/>
    <property type="match status" value="1"/>
</dbReference>
<dbReference type="PANTHER" id="PTHR34378:SF1">
    <property type="entry name" value="GLUTAMATE--CYSTEINE LIGASE, CHLOROPLASTIC"/>
    <property type="match status" value="1"/>
</dbReference>
<dbReference type="Pfam" id="PF04107">
    <property type="entry name" value="GCS2"/>
    <property type="match status" value="1"/>
</dbReference>
<dbReference type="PIRSF" id="PIRSF017901">
    <property type="entry name" value="GCL"/>
    <property type="match status" value="1"/>
</dbReference>
<dbReference type="SUPFAM" id="SSF55931">
    <property type="entry name" value="Glutamine synthetase/guanido kinase"/>
    <property type="match status" value="1"/>
</dbReference>